<reference key="1">
    <citation type="journal article" date="2009" name="PLoS Genet.">
        <title>The genome of Nectria haematococca: contribution of supernumerary chromosomes to gene expansion.</title>
        <authorList>
            <person name="Coleman J.J."/>
            <person name="Rounsley S.D."/>
            <person name="Rodriguez-Carres M."/>
            <person name="Kuo A."/>
            <person name="Wasmann C.C."/>
            <person name="Grimwood J."/>
            <person name="Schmutz J."/>
            <person name="Taga M."/>
            <person name="White G.J."/>
            <person name="Zhou S."/>
            <person name="Schwartz D.C."/>
            <person name="Freitag M."/>
            <person name="Ma L.-J."/>
            <person name="Danchin E.G.J."/>
            <person name="Henrissat B."/>
            <person name="Coutinho P.M."/>
            <person name="Nelson D.R."/>
            <person name="Straney D."/>
            <person name="Napoli C.A."/>
            <person name="Barker B.M."/>
            <person name="Gribskov M."/>
            <person name="Rep M."/>
            <person name="Kroken S."/>
            <person name="Molnar I."/>
            <person name="Rensing C."/>
            <person name="Kennell J.C."/>
            <person name="Zamora J."/>
            <person name="Farman M.L."/>
            <person name="Selker E.U."/>
            <person name="Salamov A."/>
            <person name="Shapiro H."/>
            <person name="Pangilinan J."/>
            <person name="Lindquist E."/>
            <person name="Lamers C."/>
            <person name="Grigoriev I.V."/>
            <person name="Geiser D.M."/>
            <person name="Covert S.F."/>
            <person name="Temporini E."/>
            <person name="VanEtten H.D."/>
        </authorList>
    </citation>
    <scope>NUCLEOTIDE SEQUENCE [LARGE SCALE GENOMIC DNA]</scope>
    <source>
        <strain>ATCC MYA-4622 / CBS 123669 / FGSC 9596 / NRRL 45880 / 77-13-4</strain>
    </source>
</reference>
<name>CHO2_FUSV7</name>
<organism>
    <name type="scientific">Fusarium vanettenii (strain ATCC MYA-4622 / CBS 123669 / FGSC 9596 / NRRL 45880 / 77-13-4)</name>
    <name type="common">Fusarium solani subsp. pisi</name>
    <dbReference type="NCBI Taxonomy" id="660122"/>
    <lineage>
        <taxon>Eukaryota</taxon>
        <taxon>Fungi</taxon>
        <taxon>Dikarya</taxon>
        <taxon>Ascomycota</taxon>
        <taxon>Pezizomycotina</taxon>
        <taxon>Sordariomycetes</taxon>
        <taxon>Hypocreomycetidae</taxon>
        <taxon>Hypocreales</taxon>
        <taxon>Nectriaceae</taxon>
        <taxon>Fusarium</taxon>
        <taxon>Fusarium solani species complex</taxon>
        <taxon>Fusarium vanettenii</taxon>
    </lineage>
</organism>
<proteinExistence type="inferred from homology"/>
<sequence>MSTAADLPSTGPGLRLRQPGVEPLVDQDKLPSQPGHSRESSDANADANVSSDKASKTYGRTPDGTVFIVPTTHDMVSQLLDPRQPKNFSDAIVLTILGLHILAAYFLPSSYKRIVFAFVFLFWRACYNIGIGVLLQIQSNHRRLVTWARRWKLFENPATGKNPRPWLYNLLKNELETKIEEDYEFEKAPIEYNTWLVFRRVVDLILMCDFVSYCLFAIVCGHSPEGENPLIGFSRWAIGISLIGFNLWVKLDAHRVVKDFAWYWGDFFYLIDQDLTFDGVFEMAPHPMYSIGYAGYYGISMMAASYEVLFISILAHLAQFAFLVIVENPHIEKTYNPPPPRKRTASESQGDVVPADVKSLEGAFDQQTLAPTHKESPAPVHNLVGLNNIDLFRVPDFTVIVLPSYVAVLTFVTPETPVWQAIFVLHALAWRVWYHLGLGLILDKQSKTKMWTRHFLKFGESAGEAWRQWKGLHHISMIMCNTAFIAACWKMYSPPEDWAYGLVMLKHVLGAGLVALQLWTAFSVYDSLGEFGWFCGDFFFDQQAKLTYKSIYRFLNNPDRFFGTAGVWGAALITWSRSIFLMALVTQILTVFYISYIERPHMQKIYGRSLRREAGLTKFIKRSLPPPVKGWQESVDKVLDDTTQFVEDFLDTARPKFAAGVKTIVRDTSALFNMAPARLTITRIAPDLQGHDPKLYSLSVQGTPSMGTSIDDKFTGKESLTGRFPKQIKTMIYEYGAPLRVKWRAPAGHSKKDWIGLYMVTDNRSRETTEVPSLGRWAPTNAGVYDSLTADVSIAVEEHPVSTTEATEIDMVEGEVEFRGDKLWWTQGVFEFRYHHDGHHTALSISEPFEIRISKFDEEDVDVGAKGLYEQAVESALLPVVQNCLDRDPDIAPNQPEEPFGGHVERDTKYAKRIVYAIREMFGIEFAPPVVAADGSVRKLAWRVSNAKEVLAPYSMSRSRGTTTPAIQDFPAEKA</sequence>
<comment type="function">
    <text evidence="1">Catalyzes the first step of the methylation pathway of phosphatidylcholine biosynthesis, the SAM-dependent methylation of phosphatidylethanolamine (PE) to phosphatidylmonomethylethanolamine (PMME).</text>
</comment>
<comment type="catalytic activity">
    <reaction evidence="1">
        <text>a 1,2-diacyl-sn-glycero-3-phosphoethanolamine + S-adenosyl-L-methionine = a 1,2-diacyl-sn-glycero-3-phospho-N-methylethanolamine + S-adenosyl-L-homocysteine + H(+)</text>
        <dbReference type="Rhea" id="RHEA:11164"/>
        <dbReference type="ChEBI" id="CHEBI:15378"/>
        <dbReference type="ChEBI" id="CHEBI:57856"/>
        <dbReference type="ChEBI" id="CHEBI:59789"/>
        <dbReference type="ChEBI" id="CHEBI:64573"/>
        <dbReference type="ChEBI" id="CHEBI:64612"/>
        <dbReference type="EC" id="2.1.1.17"/>
    </reaction>
</comment>
<comment type="pathway">
    <text evidence="1">Phospholipid metabolism; phosphatidylcholine biosynthesis.</text>
</comment>
<comment type="subcellular location">
    <subcellularLocation>
        <location evidence="1">Endoplasmic reticulum membrane</location>
        <topology evidence="1">Multi-pass membrane protein</topology>
    </subcellularLocation>
</comment>
<comment type="similarity">
    <text evidence="1">Belongs to the class VI-like SAM-binding methyltransferase superfamily. CHO2 family.</text>
</comment>
<evidence type="ECO:0000255" key="1">
    <source>
        <dbReference type="HAMAP-Rule" id="MF_03217"/>
    </source>
</evidence>
<evidence type="ECO:0000256" key="2">
    <source>
        <dbReference type="SAM" id="MobiDB-lite"/>
    </source>
</evidence>
<keyword id="KW-0256">Endoplasmic reticulum</keyword>
<keyword id="KW-0444">Lipid biosynthesis</keyword>
<keyword id="KW-0443">Lipid metabolism</keyword>
<keyword id="KW-0472">Membrane</keyword>
<keyword id="KW-0489">Methyltransferase</keyword>
<keyword id="KW-0594">Phospholipid biosynthesis</keyword>
<keyword id="KW-1208">Phospholipid metabolism</keyword>
<keyword id="KW-1185">Reference proteome</keyword>
<keyword id="KW-0949">S-adenosyl-L-methionine</keyword>
<keyword id="KW-0808">Transferase</keyword>
<keyword id="KW-0812">Transmembrane</keyword>
<keyword id="KW-1133">Transmembrane helix</keyword>
<feature type="chain" id="PRO_0000405898" description="Phosphatidylethanolamine N-methyltransferase">
    <location>
        <begin position="1"/>
        <end position="975"/>
    </location>
</feature>
<feature type="topological domain" description="Lumenal" evidence="1">
    <location>
        <begin position="1"/>
        <end position="87"/>
    </location>
</feature>
<feature type="transmembrane region" description="Helical" evidence="1">
    <location>
        <begin position="88"/>
        <end position="108"/>
    </location>
</feature>
<feature type="topological domain" description="Cytoplasmic" evidence="1">
    <location>
        <begin position="109"/>
        <end position="113"/>
    </location>
</feature>
<feature type="transmembrane region" description="Helical" evidence="1">
    <location>
        <begin position="114"/>
        <end position="134"/>
    </location>
</feature>
<feature type="topological domain" description="Lumenal" evidence="1">
    <location>
        <begin position="135"/>
        <end position="200"/>
    </location>
</feature>
<feature type="transmembrane region" description="Helical" evidence="1">
    <location>
        <begin position="201"/>
        <end position="221"/>
    </location>
</feature>
<feature type="topological domain" description="Cytoplasmic" evidence="1">
    <location>
        <begin position="222"/>
        <end position="228"/>
    </location>
</feature>
<feature type="transmembrane region" description="Helical" evidence="1">
    <location>
        <begin position="229"/>
        <end position="249"/>
    </location>
</feature>
<feature type="topological domain" description="Lumenal" evidence="1">
    <location>
        <begin position="250"/>
        <end position="278"/>
    </location>
</feature>
<feature type="transmembrane region" description="Helical" evidence="1">
    <location>
        <begin position="279"/>
        <end position="299"/>
    </location>
</feature>
<feature type="topological domain" description="Cytoplasmic" evidence="1">
    <location>
        <begin position="300"/>
        <end position="305"/>
    </location>
</feature>
<feature type="transmembrane region" description="Helical" evidence="1">
    <location>
        <begin position="306"/>
        <end position="326"/>
    </location>
</feature>
<feature type="topological domain" description="Lumenal" evidence="1">
    <location>
        <begin position="327"/>
        <end position="393"/>
    </location>
</feature>
<feature type="transmembrane region" description="Helical" evidence="1">
    <location>
        <begin position="394"/>
        <end position="414"/>
    </location>
</feature>
<feature type="topological domain" description="Cytoplasmic" evidence="1">
    <location>
        <begin position="415"/>
        <end position="421"/>
    </location>
</feature>
<feature type="transmembrane region" description="Helical" evidence="1">
    <location>
        <begin position="422"/>
        <end position="442"/>
    </location>
</feature>
<feature type="topological domain" description="Lumenal" evidence="1">
    <location>
        <begin position="443"/>
        <end position="468"/>
    </location>
</feature>
<feature type="transmembrane region" description="Helical" evidence="1">
    <location>
        <begin position="469"/>
        <end position="489"/>
    </location>
</feature>
<feature type="topological domain" description="Cytoplasmic" evidence="1">
    <location>
        <begin position="490"/>
        <end position="501"/>
    </location>
</feature>
<feature type="transmembrane region" description="Helical" evidence="1">
    <location>
        <begin position="502"/>
        <end position="522"/>
    </location>
</feature>
<feature type="topological domain" description="Lumenal" evidence="1">
    <location>
        <begin position="523"/>
        <end position="577"/>
    </location>
</feature>
<feature type="transmembrane region" description="Helical" evidence="1">
    <location>
        <begin position="578"/>
        <end position="598"/>
    </location>
</feature>
<feature type="topological domain" description="Cytoplasmic" evidence="1">
    <location>
        <begin position="599"/>
        <end position="975"/>
    </location>
</feature>
<feature type="region of interest" description="Disordered" evidence="2">
    <location>
        <begin position="1"/>
        <end position="58"/>
    </location>
</feature>
<feature type="compositionally biased region" description="Low complexity" evidence="2">
    <location>
        <begin position="42"/>
        <end position="52"/>
    </location>
</feature>
<dbReference type="EC" id="2.1.1.17" evidence="1"/>
<dbReference type="EMBL" id="GG698910">
    <property type="protein sequence ID" value="EEU40846.1"/>
    <property type="molecule type" value="Genomic_DNA"/>
</dbReference>
<dbReference type="RefSeq" id="XP_003046559.1">
    <property type="nucleotide sequence ID" value="XM_003046513.1"/>
</dbReference>
<dbReference type="SMR" id="C7Z7C3"/>
<dbReference type="FunCoup" id="C7Z7C3">
    <property type="interactions" value="69"/>
</dbReference>
<dbReference type="STRING" id="660122.C7Z7C3"/>
<dbReference type="EnsemblFungi" id="NechaT76384">
    <property type="protein sequence ID" value="NechaP76384"/>
    <property type="gene ID" value="NechaG76384"/>
</dbReference>
<dbReference type="GeneID" id="9668269"/>
<dbReference type="KEGG" id="nhe:NECHADRAFT_76384"/>
<dbReference type="VEuPathDB" id="FungiDB:NECHADRAFT_76384"/>
<dbReference type="eggNOG" id="ENOG502QRGH">
    <property type="taxonomic scope" value="Eukaryota"/>
</dbReference>
<dbReference type="HOGENOM" id="CLU_005987_0_1_1"/>
<dbReference type="InParanoid" id="C7Z7C3"/>
<dbReference type="OMA" id="RIWYSVG"/>
<dbReference type="OrthoDB" id="4583at2759"/>
<dbReference type="UniPathway" id="UPA00753"/>
<dbReference type="Proteomes" id="UP000005206">
    <property type="component" value="Unassembled WGS sequence"/>
</dbReference>
<dbReference type="GO" id="GO:0032541">
    <property type="term" value="C:cortical endoplasmic reticulum"/>
    <property type="evidence" value="ECO:0007669"/>
    <property type="project" value="EnsemblFungi"/>
</dbReference>
<dbReference type="GO" id="GO:0005789">
    <property type="term" value="C:endoplasmic reticulum membrane"/>
    <property type="evidence" value="ECO:0007669"/>
    <property type="project" value="UniProtKB-SubCell"/>
</dbReference>
<dbReference type="GO" id="GO:0097038">
    <property type="term" value="C:perinuclear endoplasmic reticulum"/>
    <property type="evidence" value="ECO:0007669"/>
    <property type="project" value="EnsemblFungi"/>
</dbReference>
<dbReference type="GO" id="GO:0004608">
    <property type="term" value="F:phosphatidylethanolamine N-methyltransferase activity"/>
    <property type="evidence" value="ECO:0007669"/>
    <property type="project" value="UniProtKB-UniRule"/>
</dbReference>
<dbReference type="GO" id="GO:0032259">
    <property type="term" value="P:methylation"/>
    <property type="evidence" value="ECO:0007669"/>
    <property type="project" value="UniProtKB-KW"/>
</dbReference>
<dbReference type="GO" id="GO:0006656">
    <property type="term" value="P:phosphatidylcholine biosynthetic process"/>
    <property type="evidence" value="ECO:0007669"/>
    <property type="project" value="UniProtKB-UniRule"/>
</dbReference>
<dbReference type="HAMAP" id="MF_03217">
    <property type="entry name" value="PEMT"/>
    <property type="match status" value="1"/>
</dbReference>
<dbReference type="InterPro" id="IPR007318">
    <property type="entry name" value="Phopholipid_MeTrfase"/>
</dbReference>
<dbReference type="InterPro" id="IPR016219">
    <property type="entry name" value="Phosphatid-EA_MeTrfase_fun"/>
</dbReference>
<dbReference type="PANTHER" id="PTHR32138">
    <property type="entry name" value="PHOSPHATIDYLETHANOLAMINE N-METHYLTRANSFERASE"/>
    <property type="match status" value="1"/>
</dbReference>
<dbReference type="PANTHER" id="PTHR32138:SF0">
    <property type="entry name" value="PHOSPHATIDYLETHANOLAMINE N-METHYLTRANSFERASE"/>
    <property type="match status" value="1"/>
</dbReference>
<dbReference type="Pfam" id="PF04191">
    <property type="entry name" value="PEMT"/>
    <property type="match status" value="2"/>
</dbReference>
<dbReference type="PIRSF" id="PIRSF000383">
    <property type="entry name" value="PEAMT"/>
    <property type="match status" value="1"/>
</dbReference>
<dbReference type="PROSITE" id="PS51598">
    <property type="entry name" value="SAM_CHO2"/>
    <property type="match status" value="1"/>
</dbReference>
<gene>
    <name type="primary">CHO2</name>
    <name type="ORF">NECHADRAFT_76384</name>
</gene>
<accession>C7Z7C3</accession>
<protein>
    <recommendedName>
        <fullName evidence="1">Phosphatidylethanolamine N-methyltransferase</fullName>
        <shortName evidence="1">PE methyltransferase</shortName>
        <shortName evidence="1">PEAMT</shortName>
        <shortName evidence="1">PEMT</shortName>
        <ecNumber evidence="1">2.1.1.17</ecNumber>
    </recommendedName>
</protein>